<feature type="chain" id="PRO_1000126138" description="Malate dehydrogenase">
    <location>
        <begin position="1"/>
        <end position="320"/>
    </location>
</feature>
<feature type="active site" description="Proton acceptor" evidence="1">
    <location>
        <position position="176"/>
    </location>
</feature>
<feature type="binding site" evidence="1">
    <location>
        <begin position="10"/>
        <end position="15"/>
    </location>
    <ligand>
        <name>NAD(+)</name>
        <dbReference type="ChEBI" id="CHEBI:57540"/>
    </ligand>
</feature>
<feature type="binding site" evidence="1">
    <location>
        <position position="34"/>
    </location>
    <ligand>
        <name>NAD(+)</name>
        <dbReference type="ChEBI" id="CHEBI:57540"/>
    </ligand>
</feature>
<feature type="binding site" evidence="1">
    <location>
        <position position="83"/>
    </location>
    <ligand>
        <name>substrate</name>
    </ligand>
</feature>
<feature type="binding site" evidence="1">
    <location>
        <position position="89"/>
    </location>
    <ligand>
        <name>substrate</name>
    </ligand>
</feature>
<feature type="binding site" evidence="1">
    <location>
        <position position="96"/>
    </location>
    <ligand>
        <name>NAD(+)</name>
        <dbReference type="ChEBI" id="CHEBI:57540"/>
    </ligand>
</feature>
<feature type="binding site" evidence="1">
    <location>
        <begin position="119"/>
        <end position="121"/>
    </location>
    <ligand>
        <name>NAD(+)</name>
        <dbReference type="ChEBI" id="CHEBI:57540"/>
    </ligand>
</feature>
<feature type="binding site" evidence="1">
    <location>
        <position position="121"/>
    </location>
    <ligand>
        <name>substrate</name>
    </ligand>
</feature>
<feature type="binding site" evidence="1">
    <location>
        <position position="152"/>
    </location>
    <ligand>
        <name>substrate</name>
    </ligand>
</feature>
<feature type="strand" evidence="2">
    <location>
        <begin position="5"/>
        <end position="9"/>
    </location>
</feature>
<feature type="helix" evidence="2">
    <location>
        <begin position="13"/>
        <end position="24"/>
    </location>
</feature>
<feature type="strand" evidence="2">
    <location>
        <begin position="29"/>
        <end position="33"/>
    </location>
</feature>
<feature type="strand" evidence="2">
    <location>
        <begin position="35"/>
        <end position="38"/>
    </location>
</feature>
<feature type="helix" evidence="2">
    <location>
        <begin position="39"/>
        <end position="54"/>
    </location>
</feature>
<feature type="strand" evidence="2">
    <location>
        <begin position="60"/>
        <end position="65"/>
    </location>
</feature>
<feature type="helix" evidence="2">
    <location>
        <begin position="66"/>
        <end position="69"/>
    </location>
</feature>
<feature type="strand" evidence="2">
    <location>
        <begin position="73"/>
        <end position="77"/>
    </location>
</feature>
<feature type="helix" evidence="2">
    <location>
        <begin position="89"/>
        <end position="92"/>
    </location>
</feature>
<feature type="helix" evidence="2">
    <location>
        <begin position="93"/>
        <end position="110"/>
    </location>
</feature>
<feature type="strand" evidence="2">
    <location>
        <begin position="115"/>
        <end position="118"/>
    </location>
</feature>
<feature type="helix" evidence="2">
    <location>
        <begin position="123"/>
        <end position="134"/>
    </location>
</feature>
<feature type="helix" evidence="2">
    <location>
        <begin position="138"/>
        <end position="140"/>
    </location>
</feature>
<feature type="strand" evidence="2">
    <location>
        <begin position="141"/>
        <end position="143"/>
    </location>
</feature>
<feature type="helix" evidence="2">
    <location>
        <begin position="146"/>
        <end position="161"/>
    </location>
</feature>
<feature type="helix" evidence="2">
    <location>
        <begin position="165"/>
        <end position="167"/>
    </location>
</feature>
<feature type="strand" evidence="2">
    <location>
        <begin position="172"/>
        <end position="174"/>
    </location>
</feature>
<feature type="helix" evidence="2">
    <location>
        <begin position="184"/>
        <end position="186"/>
    </location>
</feature>
<feature type="helix" evidence="2">
    <location>
        <begin position="194"/>
        <end position="199"/>
    </location>
</feature>
<feature type="helix" evidence="2">
    <location>
        <begin position="205"/>
        <end position="216"/>
    </location>
</feature>
<feature type="helix" evidence="2">
    <location>
        <begin position="218"/>
        <end position="226"/>
    </location>
</feature>
<feature type="strand" evidence="2">
    <location>
        <begin position="227"/>
        <end position="229"/>
    </location>
</feature>
<feature type="helix" evidence="2">
    <location>
        <begin position="233"/>
        <end position="247"/>
    </location>
</feature>
<feature type="strand" evidence="2">
    <location>
        <begin position="252"/>
        <end position="262"/>
    </location>
</feature>
<feature type="helix" evidence="2">
    <location>
        <begin position="263"/>
        <end position="265"/>
    </location>
</feature>
<feature type="strand" evidence="2">
    <location>
        <begin position="267"/>
        <end position="278"/>
    </location>
</feature>
<feature type="strand" evidence="2">
    <location>
        <begin position="281"/>
        <end position="285"/>
    </location>
</feature>
<feature type="helix" evidence="2">
    <location>
        <begin position="292"/>
        <end position="314"/>
    </location>
</feature>
<sequence length="320" mass="33647">MARSKIALIGAGQIGGTLAHLAGLKELGDVVLFDIVDGVPQGKALDIAESAPVDGFDAKYSGASDYSAIAGADVVIVTAGVPRKPGMSRDDLIGINLKVMEAVGAGIKEHAPDAFVICITNPLDAMVWALQKFSGLPTNKVVGMAGVLDSARFRHFLAEEFGVSVEDVTAFVLGGHGDDMVPLTRYSTVAGVPLTDLVKLGWTTQEKLDAMVERTRKGGGEIVNLLKTGSAFYAPAASAIAMAESYLRDKKRVLPCAAYLDGQYGIDGLYVGVPVVIGENGVERVLEVTFNDDEKAMFEKSVNSVKGLIEACKSVNDKLA</sequence>
<accession>A9W386</accession>
<proteinExistence type="evidence at protein level"/>
<protein>
    <recommendedName>
        <fullName evidence="1">Malate dehydrogenase</fullName>
        <ecNumber evidence="1">1.1.1.37</ecNumber>
    </recommendedName>
</protein>
<gene>
    <name evidence="1" type="primary">mdh</name>
    <name type="ordered locus">Mext_1643</name>
</gene>
<keyword id="KW-0002">3D-structure</keyword>
<keyword id="KW-0520">NAD</keyword>
<keyword id="KW-0560">Oxidoreductase</keyword>
<keyword id="KW-0816">Tricarboxylic acid cycle</keyword>
<dbReference type="EC" id="1.1.1.37" evidence="1"/>
<dbReference type="EMBL" id="CP000908">
    <property type="protein sequence ID" value="ABY30042.1"/>
    <property type="molecule type" value="Genomic_DNA"/>
</dbReference>
<dbReference type="RefSeq" id="WP_003599890.1">
    <property type="nucleotide sequence ID" value="NC_010172.1"/>
</dbReference>
<dbReference type="PDB" id="4ROS">
    <property type="method" value="X-ray"/>
    <property type="resolution" value="1.95 A"/>
    <property type="chains" value="A=1-320"/>
</dbReference>
<dbReference type="PDB" id="5ULV">
    <property type="method" value="X-ray"/>
    <property type="resolution" value="1.66 A"/>
    <property type="chains" value="A=1-320"/>
</dbReference>
<dbReference type="PDBsum" id="4ROS"/>
<dbReference type="PDBsum" id="5ULV"/>
<dbReference type="SMR" id="A9W386"/>
<dbReference type="KEGG" id="mex:Mext_1643"/>
<dbReference type="eggNOG" id="COG0039">
    <property type="taxonomic scope" value="Bacteria"/>
</dbReference>
<dbReference type="HOGENOM" id="CLU_045401_2_1_5"/>
<dbReference type="BioCyc" id="MEXT419610:MEXT_RS08340-MONOMER"/>
<dbReference type="EvolutionaryTrace" id="A9W386"/>
<dbReference type="GO" id="GO:0004459">
    <property type="term" value="F:L-lactate dehydrogenase activity"/>
    <property type="evidence" value="ECO:0007669"/>
    <property type="project" value="TreeGrafter"/>
</dbReference>
<dbReference type="GO" id="GO:0030060">
    <property type="term" value="F:L-malate dehydrogenase (NAD+) activity"/>
    <property type="evidence" value="ECO:0007669"/>
    <property type="project" value="UniProtKB-UniRule"/>
</dbReference>
<dbReference type="GO" id="GO:0006089">
    <property type="term" value="P:lactate metabolic process"/>
    <property type="evidence" value="ECO:0007669"/>
    <property type="project" value="TreeGrafter"/>
</dbReference>
<dbReference type="GO" id="GO:0006099">
    <property type="term" value="P:tricarboxylic acid cycle"/>
    <property type="evidence" value="ECO:0007669"/>
    <property type="project" value="UniProtKB-UniRule"/>
</dbReference>
<dbReference type="CDD" id="cd01339">
    <property type="entry name" value="LDH-like_MDH"/>
    <property type="match status" value="1"/>
</dbReference>
<dbReference type="FunFam" id="3.40.50.720:FF:000018">
    <property type="entry name" value="Malate dehydrogenase"/>
    <property type="match status" value="1"/>
</dbReference>
<dbReference type="FunFam" id="3.90.110.10:FF:000004">
    <property type="entry name" value="Malate dehydrogenase"/>
    <property type="match status" value="1"/>
</dbReference>
<dbReference type="Gene3D" id="3.90.110.10">
    <property type="entry name" value="Lactate dehydrogenase/glycoside hydrolase, family 4, C-terminal"/>
    <property type="match status" value="1"/>
</dbReference>
<dbReference type="Gene3D" id="3.40.50.720">
    <property type="entry name" value="NAD(P)-binding Rossmann-like Domain"/>
    <property type="match status" value="1"/>
</dbReference>
<dbReference type="HAMAP" id="MF_00487">
    <property type="entry name" value="Malate_dehydrog_3"/>
    <property type="match status" value="1"/>
</dbReference>
<dbReference type="InterPro" id="IPR001557">
    <property type="entry name" value="L-lactate/malate_DH"/>
</dbReference>
<dbReference type="InterPro" id="IPR022383">
    <property type="entry name" value="Lactate/malate_DH_C"/>
</dbReference>
<dbReference type="InterPro" id="IPR001236">
    <property type="entry name" value="Lactate/malate_DH_N"/>
</dbReference>
<dbReference type="InterPro" id="IPR015955">
    <property type="entry name" value="Lactate_DH/Glyco_Ohase_4_C"/>
</dbReference>
<dbReference type="InterPro" id="IPR011275">
    <property type="entry name" value="Malate_DH_type3"/>
</dbReference>
<dbReference type="InterPro" id="IPR036291">
    <property type="entry name" value="NAD(P)-bd_dom_sf"/>
</dbReference>
<dbReference type="NCBIfam" id="TIGR01763">
    <property type="entry name" value="MalateDH_bact"/>
    <property type="match status" value="1"/>
</dbReference>
<dbReference type="NCBIfam" id="NF004863">
    <property type="entry name" value="PRK06223.1"/>
    <property type="match status" value="1"/>
</dbReference>
<dbReference type="PANTHER" id="PTHR43128">
    <property type="entry name" value="L-2-HYDROXYCARBOXYLATE DEHYDROGENASE (NAD(P)(+))"/>
    <property type="match status" value="1"/>
</dbReference>
<dbReference type="PANTHER" id="PTHR43128:SF16">
    <property type="entry name" value="L-LACTATE DEHYDROGENASE"/>
    <property type="match status" value="1"/>
</dbReference>
<dbReference type="Pfam" id="PF02866">
    <property type="entry name" value="Ldh_1_C"/>
    <property type="match status" value="1"/>
</dbReference>
<dbReference type="Pfam" id="PF00056">
    <property type="entry name" value="Ldh_1_N"/>
    <property type="match status" value="1"/>
</dbReference>
<dbReference type="PIRSF" id="PIRSF000102">
    <property type="entry name" value="Lac_mal_DH"/>
    <property type="match status" value="1"/>
</dbReference>
<dbReference type="PRINTS" id="PR00086">
    <property type="entry name" value="LLDHDRGNASE"/>
</dbReference>
<dbReference type="SUPFAM" id="SSF56327">
    <property type="entry name" value="LDH C-terminal domain-like"/>
    <property type="match status" value="1"/>
</dbReference>
<dbReference type="SUPFAM" id="SSF51735">
    <property type="entry name" value="NAD(P)-binding Rossmann-fold domains"/>
    <property type="match status" value="1"/>
</dbReference>
<reference key="1">
    <citation type="submission" date="2007-12" db="EMBL/GenBank/DDBJ databases">
        <title>Complete sequence of Methylobacterium extorquens PA1.</title>
        <authorList>
            <consortium name="US DOE Joint Genome Institute"/>
            <person name="Copeland A."/>
            <person name="Lucas S."/>
            <person name="Lapidus A."/>
            <person name="Barry K."/>
            <person name="Glavina del Rio T."/>
            <person name="Dalin E."/>
            <person name="Tice H."/>
            <person name="Pitluck S."/>
            <person name="Saunders E."/>
            <person name="Brettin T."/>
            <person name="Bruce D."/>
            <person name="Detter J.C."/>
            <person name="Han C."/>
            <person name="Schmutz J."/>
            <person name="Larimer F."/>
            <person name="Land M."/>
            <person name="Hauser L."/>
            <person name="Kyrpides N."/>
            <person name="Kim E."/>
            <person name="Marx C."/>
            <person name="Richardson P."/>
        </authorList>
    </citation>
    <scope>NUCLEOTIDE SEQUENCE [LARGE SCALE GENOMIC DNA]</scope>
    <source>
        <strain>PA1</strain>
    </source>
</reference>
<name>MDH_METEP</name>
<evidence type="ECO:0000255" key="1">
    <source>
        <dbReference type="HAMAP-Rule" id="MF_00487"/>
    </source>
</evidence>
<evidence type="ECO:0007829" key="2">
    <source>
        <dbReference type="PDB" id="4ROS"/>
    </source>
</evidence>
<organism>
    <name type="scientific">Methylorubrum extorquens (strain PA1)</name>
    <name type="common">Methylobacterium extorquens</name>
    <dbReference type="NCBI Taxonomy" id="419610"/>
    <lineage>
        <taxon>Bacteria</taxon>
        <taxon>Pseudomonadati</taxon>
        <taxon>Pseudomonadota</taxon>
        <taxon>Alphaproteobacteria</taxon>
        <taxon>Hyphomicrobiales</taxon>
        <taxon>Methylobacteriaceae</taxon>
        <taxon>Methylorubrum</taxon>
    </lineage>
</organism>
<comment type="function">
    <text evidence="1">Catalyzes the reversible oxidation of malate to oxaloacetate.</text>
</comment>
<comment type="catalytic activity">
    <reaction evidence="1">
        <text>(S)-malate + NAD(+) = oxaloacetate + NADH + H(+)</text>
        <dbReference type="Rhea" id="RHEA:21432"/>
        <dbReference type="ChEBI" id="CHEBI:15378"/>
        <dbReference type="ChEBI" id="CHEBI:15589"/>
        <dbReference type="ChEBI" id="CHEBI:16452"/>
        <dbReference type="ChEBI" id="CHEBI:57540"/>
        <dbReference type="ChEBI" id="CHEBI:57945"/>
        <dbReference type="EC" id="1.1.1.37"/>
    </reaction>
</comment>
<comment type="similarity">
    <text evidence="1">Belongs to the LDH/MDH superfamily. MDH type 3 family.</text>
</comment>